<gene>
    <name evidence="1" type="primary">napA</name>
    <name type="ordered locus">RALTA_B0651</name>
</gene>
<protein>
    <recommendedName>
        <fullName evidence="1">Periplasmic nitrate reductase</fullName>
        <ecNumber evidence="1">1.9.6.1</ecNumber>
    </recommendedName>
</protein>
<evidence type="ECO:0000255" key="1">
    <source>
        <dbReference type="HAMAP-Rule" id="MF_01630"/>
    </source>
</evidence>
<accession>B3R8B4</accession>
<proteinExistence type="inferred from homology"/>
<reference key="1">
    <citation type="journal article" date="2008" name="Genome Res.">
        <title>Genome sequence of the beta-rhizobium Cupriavidus taiwanensis and comparative genomics of rhizobia.</title>
        <authorList>
            <person name="Amadou C."/>
            <person name="Pascal G."/>
            <person name="Mangenot S."/>
            <person name="Glew M."/>
            <person name="Bontemps C."/>
            <person name="Capela D."/>
            <person name="Carrere S."/>
            <person name="Cruveiller S."/>
            <person name="Dossat C."/>
            <person name="Lajus A."/>
            <person name="Marchetti M."/>
            <person name="Poinsot V."/>
            <person name="Rouy Z."/>
            <person name="Servin B."/>
            <person name="Saad M."/>
            <person name="Schenowitz C."/>
            <person name="Barbe V."/>
            <person name="Batut J."/>
            <person name="Medigue C."/>
            <person name="Masson-Boivin C."/>
        </authorList>
    </citation>
    <scope>NUCLEOTIDE SEQUENCE [LARGE SCALE GENOMIC DNA]</scope>
    <source>
        <strain>DSM 17343 / BCRC 17206 / CCUG 44338 / CIP 107171 / LMG 19424 / R1</strain>
    </source>
</reference>
<comment type="function">
    <text evidence="1">Catalytic subunit of the periplasmic nitrate reductase complex NapAB. Receives electrons from NapB and catalyzes the reduction of nitrate to nitrite.</text>
</comment>
<comment type="catalytic activity">
    <reaction evidence="1">
        <text>2 Fe(II)-[cytochrome] + nitrate + 2 H(+) = 2 Fe(III)-[cytochrome] + nitrite + H2O</text>
        <dbReference type="Rhea" id="RHEA:12909"/>
        <dbReference type="Rhea" id="RHEA-COMP:11777"/>
        <dbReference type="Rhea" id="RHEA-COMP:11778"/>
        <dbReference type="ChEBI" id="CHEBI:15377"/>
        <dbReference type="ChEBI" id="CHEBI:15378"/>
        <dbReference type="ChEBI" id="CHEBI:16301"/>
        <dbReference type="ChEBI" id="CHEBI:17632"/>
        <dbReference type="ChEBI" id="CHEBI:29033"/>
        <dbReference type="ChEBI" id="CHEBI:29034"/>
        <dbReference type="EC" id="1.9.6.1"/>
    </reaction>
</comment>
<comment type="cofactor">
    <cofactor evidence="1">
        <name>[4Fe-4S] cluster</name>
        <dbReference type="ChEBI" id="CHEBI:49883"/>
    </cofactor>
    <text evidence="1">Binds 1 [4Fe-4S] cluster.</text>
</comment>
<comment type="cofactor">
    <cofactor evidence="1">
        <name>Mo-bis(molybdopterin guanine dinucleotide)</name>
        <dbReference type="ChEBI" id="CHEBI:60539"/>
    </cofactor>
    <text evidence="1">Binds 1 molybdenum-bis(molybdopterin guanine dinucleotide) (Mo-bis-MGD) cofactor per subunit.</text>
</comment>
<comment type="subunit">
    <text evidence="1">Component of the periplasmic nitrate reductase NapAB complex composed of NapA and NapB.</text>
</comment>
<comment type="subcellular location">
    <subcellularLocation>
        <location evidence="1">Periplasm</location>
    </subcellularLocation>
</comment>
<comment type="PTM">
    <text evidence="1">Predicted to be exported by the Tat system. The position of the signal peptide cleavage has not been experimentally proven.</text>
</comment>
<comment type="similarity">
    <text evidence="1">Belongs to the prokaryotic molybdopterin-containing oxidoreductase family. NasA/NapA/NarB subfamily.</text>
</comment>
<keyword id="KW-0004">4Fe-4S</keyword>
<keyword id="KW-0249">Electron transport</keyword>
<keyword id="KW-0408">Iron</keyword>
<keyword id="KW-0411">Iron-sulfur</keyword>
<keyword id="KW-0479">Metal-binding</keyword>
<keyword id="KW-0500">Molybdenum</keyword>
<keyword id="KW-0534">Nitrate assimilation</keyword>
<keyword id="KW-0560">Oxidoreductase</keyword>
<keyword id="KW-0574">Periplasm</keyword>
<keyword id="KW-0732">Signal</keyword>
<keyword id="KW-0813">Transport</keyword>
<organism>
    <name type="scientific">Cupriavidus taiwanensis (strain DSM 17343 / BCRC 17206 / CCUG 44338 / CIP 107171 / LMG 19424 / R1)</name>
    <name type="common">Ralstonia taiwanensis (strain LMG 19424)</name>
    <dbReference type="NCBI Taxonomy" id="977880"/>
    <lineage>
        <taxon>Bacteria</taxon>
        <taxon>Pseudomonadati</taxon>
        <taxon>Pseudomonadota</taxon>
        <taxon>Betaproteobacteria</taxon>
        <taxon>Burkholderiales</taxon>
        <taxon>Burkholderiaceae</taxon>
        <taxon>Cupriavidus</taxon>
    </lineage>
</organism>
<feature type="signal peptide" description="Tat-type signal" evidence="1">
    <location>
        <begin position="1"/>
        <end position="29"/>
    </location>
</feature>
<feature type="chain" id="PRO_1000186352" description="Periplasmic nitrate reductase" evidence="1">
    <location>
        <begin position="30"/>
        <end position="831"/>
    </location>
</feature>
<feature type="domain" description="4Fe-4S Mo/W bis-MGD-type" evidence="1">
    <location>
        <begin position="41"/>
        <end position="97"/>
    </location>
</feature>
<feature type="binding site" evidence="1">
    <location>
        <position position="48"/>
    </location>
    <ligand>
        <name>[4Fe-4S] cluster</name>
        <dbReference type="ChEBI" id="CHEBI:49883"/>
    </ligand>
</feature>
<feature type="binding site" evidence="1">
    <location>
        <position position="51"/>
    </location>
    <ligand>
        <name>[4Fe-4S] cluster</name>
        <dbReference type="ChEBI" id="CHEBI:49883"/>
    </ligand>
</feature>
<feature type="binding site" evidence="1">
    <location>
        <position position="55"/>
    </location>
    <ligand>
        <name>[4Fe-4S] cluster</name>
        <dbReference type="ChEBI" id="CHEBI:49883"/>
    </ligand>
</feature>
<feature type="binding site" evidence="1">
    <location>
        <position position="83"/>
    </location>
    <ligand>
        <name>[4Fe-4S] cluster</name>
        <dbReference type="ChEBI" id="CHEBI:49883"/>
    </ligand>
</feature>
<feature type="binding site" evidence="1">
    <location>
        <position position="85"/>
    </location>
    <ligand>
        <name>Mo-bis(molybdopterin guanine dinucleotide)</name>
        <dbReference type="ChEBI" id="CHEBI:60539"/>
    </ligand>
</feature>
<feature type="binding site" evidence="1">
    <location>
        <position position="152"/>
    </location>
    <ligand>
        <name>Mo-bis(molybdopterin guanine dinucleotide)</name>
        <dbReference type="ChEBI" id="CHEBI:60539"/>
    </ligand>
</feature>
<feature type="binding site" evidence="1">
    <location>
        <position position="177"/>
    </location>
    <ligand>
        <name>Mo-bis(molybdopterin guanine dinucleotide)</name>
        <dbReference type="ChEBI" id="CHEBI:60539"/>
    </ligand>
</feature>
<feature type="binding site" evidence="1">
    <location>
        <position position="181"/>
    </location>
    <ligand>
        <name>Mo-bis(molybdopterin guanine dinucleotide)</name>
        <dbReference type="ChEBI" id="CHEBI:60539"/>
    </ligand>
</feature>
<feature type="binding site" evidence="1">
    <location>
        <begin position="214"/>
        <end position="221"/>
    </location>
    <ligand>
        <name>Mo-bis(molybdopterin guanine dinucleotide)</name>
        <dbReference type="ChEBI" id="CHEBI:60539"/>
    </ligand>
</feature>
<feature type="binding site" evidence="1">
    <location>
        <begin position="245"/>
        <end position="249"/>
    </location>
    <ligand>
        <name>Mo-bis(molybdopterin guanine dinucleotide)</name>
        <dbReference type="ChEBI" id="CHEBI:60539"/>
    </ligand>
</feature>
<feature type="binding site" evidence="1">
    <location>
        <begin position="264"/>
        <end position="266"/>
    </location>
    <ligand>
        <name>Mo-bis(molybdopterin guanine dinucleotide)</name>
        <dbReference type="ChEBI" id="CHEBI:60539"/>
    </ligand>
</feature>
<feature type="binding site" evidence="1">
    <location>
        <position position="375"/>
    </location>
    <ligand>
        <name>Mo-bis(molybdopterin guanine dinucleotide)</name>
        <dbReference type="ChEBI" id="CHEBI:60539"/>
    </ligand>
</feature>
<feature type="binding site" evidence="1">
    <location>
        <position position="379"/>
    </location>
    <ligand>
        <name>Mo-bis(molybdopterin guanine dinucleotide)</name>
        <dbReference type="ChEBI" id="CHEBI:60539"/>
    </ligand>
</feature>
<feature type="binding site" evidence="1">
    <location>
        <position position="485"/>
    </location>
    <ligand>
        <name>Mo-bis(molybdopterin guanine dinucleotide)</name>
        <dbReference type="ChEBI" id="CHEBI:60539"/>
    </ligand>
</feature>
<feature type="binding site" evidence="1">
    <location>
        <begin position="511"/>
        <end position="512"/>
    </location>
    <ligand>
        <name>Mo-bis(molybdopterin guanine dinucleotide)</name>
        <dbReference type="ChEBI" id="CHEBI:60539"/>
    </ligand>
</feature>
<feature type="binding site" evidence="1">
    <location>
        <position position="534"/>
    </location>
    <ligand>
        <name>Mo-bis(molybdopterin guanine dinucleotide)</name>
        <dbReference type="ChEBI" id="CHEBI:60539"/>
    </ligand>
</feature>
<feature type="binding site" evidence="1">
    <location>
        <position position="561"/>
    </location>
    <ligand>
        <name>Mo-bis(molybdopterin guanine dinucleotide)</name>
        <dbReference type="ChEBI" id="CHEBI:60539"/>
    </ligand>
</feature>
<feature type="binding site" evidence="1">
    <location>
        <begin position="721"/>
        <end position="730"/>
    </location>
    <ligand>
        <name>Mo-bis(molybdopterin guanine dinucleotide)</name>
        <dbReference type="ChEBI" id="CHEBI:60539"/>
    </ligand>
</feature>
<feature type="binding site" evidence="1">
    <location>
        <position position="797"/>
    </location>
    <ligand>
        <name>substrate</name>
    </ligand>
</feature>
<feature type="binding site" evidence="1">
    <location>
        <position position="805"/>
    </location>
    <ligand>
        <name>Mo-bis(molybdopterin guanine dinucleotide)</name>
        <dbReference type="ChEBI" id="CHEBI:60539"/>
    </ligand>
</feature>
<feature type="binding site" evidence="1">
    <location>
        <position position="822"/>
    </location>
    <ligand>
        <name>Mo-bis(molybdopterin guanine dinucleotide)</name>
        <dbReference type="ChEBI" id="CHEBI:60539"/>
    </ligand>
</feature>
<dbReference type="EC" id="1.9.6.1" evidence="1"/>
<dbReference type="EMBL" id="CU633750">
    <property type="protein sequence ID" value="CAQ71270.1"/>
    <property type="molecule type" value="Genomic_DNA"/>
</dbReference>
<dbReference type="RefSeq" id="WP_012355493.1">
    <property type="nucleotide sequence ID" value="NC_010530.1"/>
</dbReference>
<dbReference type="SMR" id="B3R8B4"/>
<dbReference type="GeneID" id="29765796"/>
<dbReference type="KEGG" id="cti:RALTA_B0651"/>
<dbReference type="eggNOG" id="COG0243">
    <property type="taxonomic scope" value="Bacteria"/>
</dbReference>
<dbReference type="HOGENOM" id="CLU_000422_13_4_4"/>
<dbReference type="BioCyc" id="CTAI977880:RALTA_RS18895-MONOMER"/>
<dbReference type="Proteomes" id="UP000001692">
    <property type="component" value="Chromosome 2"/>
</dbReference>
<dbReference type="GO" id="GO:0016020">
    <property type="term" value="C:membrane"/>
    <property type="evidence" value="ECO:0007669"/>
    <property type="project" value="TreeGrafter"/>
</dbReference>
<dbReference type="GO" id="GO:0009325">
    <property type="term" value="C:nitrate reductase complex"/>
    <property type="evidence" value="ECO:0007669"/>
    <property type="project" value="TreeGrafter"/>
</dbReference>
<dbReference type="GO" id="GO:0042597">
    <property type="term" value="C:periplasmic space"/>
    <property type="evidence" value="ECO:0007669"/>
    <property type="project" value="UniProtKB-SubCell"/>
</dbReference>
<dbReference type="GO" id="GO:0051539">
    <property type="term" value="F:4 iron, 4 sulfur cluster binding"/>
    <property type="evidence" value="ECO:0007669"/>
    <property type="project" value="UniProtKB-KW"/>
</dbReference>
<dbReference type="GO" id="GO:0009055">
    <property type="term" value="F:electron transfer activity"/>
    <property type="evidence" value="ECO:0007669"/>
    <property type="project" value="UniProtKB-UniRule"/>
</dbReference>
<dbReference type="GO" id="GO:0005506">
    <property type="term" value="F:iron ion binding"/>
    <property type="evidence" value="ECO:0007669"/>
    <property type="project" value="UniProtKB-UniRule"/>
</dbReference>
<dbReference type="GO" id="GO:0030151">
    <property type="term" value="F:molybdenum ion binding"/>
    <property type="evidence" value="ECO:0007669"/>
    <property type="project" value="InterPro"/>
</dbReference>
<dbReference type="GO" id="GO:0043546">
    <property type="term" value="F:molybdopterin cofactor binding"/>
    <property type="evidence" value="ECO:0007669"/>
    <property type="project" value="InterPro"/>
</dbReference>
<dbReference type="GO" id="GO:0050140">
    <property type="term" value="F:nitrate reductase (cytochrome) activity"/>
    <property type="evidence" value="ECO:0007669"/>
    <property type="project" value="UniProtKB-EC"/>
</dbReference>
<dbReference type="GO" id="GO:0045333">
    <property type="term" value="P:cellular respiration"/>
    <property type="evidence" value="ECO:0007669"/>
    <property type="project" value="UniProtKB-ARBA"/>
</dbReference>
<dbReference type="GO" id="GO:0006777">
    <property type="term" value="P:Mo-molybdopterin cofactor biosynthetic process"/>
    <property type="evidence" value="ECO:0007669"/>
    <property type="project" value="UniProtKB-UniRule"/>
</dbReference>
<dbReference type="GO" id="GO:0042128">
    <property type="term" value="P:nitrate assimilation"/>
    <property type="evidence" value="ECO:0007669"/>
    <property type="project" value="UniProtKB-UniRule"/>
</dbReference>
<dbReference type="CDD" id="cd02791">
    <property type="entry name" value="MopB_CT_Nitrate-R-NapA-like"/>
    <property type="match status" value="1"/>
</dbReference>
<dbReference type="CDD" id="cd02754">
    <property type="entry name" value="MopB_Nitrate-R-NapA-like"/>
    <property type="match status" value="1"/>
</dbReference>
<dbReference type="FunFam" id="2.40.40.20:FF:000005">
    <property type="entry name" value="Periplasmic nitrate reductase"/>
    <property type="match status" value="1"/>
</dbReference>
<dbReference type="Gene3D" id="2.40.40.20">
    <property type="match status" value="1"/>
</dbReference>
<dbReference type="Gene3D" id="3.30.200.210">
    <property type="match status" value="1"/>
</dbReference>
<dbReference type="Gene3D" id="3.40.50.740">
    <property type="match status" value="1"/>
</dbReference>
<dbReference type="Gene3D" id="3.40.228.10">
    <property type="entry name" value="Dimethylsulfoxide Reductase, domain 2"/>
    <property type="match status" value="1"/>
</dbReference>
<dbReference type="HAMAP" id="MF_01630">
    <property type="entry name" value="Nitrate_reduct_NapA"/>
    <property type="match status" value="1"/>
</dbReference>
<dbReference type="InterPro" id="IPR009010">
    <property type="entry name" value="Asp_de-COase-like_dom_sf"/>
</dbReference>
<dbReference type="InterPro" id="IPR041957">
    <property type="entry name" value="CT_Nitrate-R-NapA-like"/>
</dbReference>
<dbReference type="InterPro" id="IPR006657">
    <property type="entry name" value="MoPterin_dinucl-bd_dom"/>
</dbReference>
<dbReference type="InterPro" id="IPR006656">
    <property type="entry name" value="Mopterin_OxRdtase"/>
</dbReference>
<dbReference type="InterPro" id="IPR006963">
    <property type="entry name" value="Mopterin_OxRdtase_4Fe-4S_dom"/>
</dbReference>
<dbReference type="InterPro" id="IPR027467">
    <property type="entry name" value="MopterinOxRdtase_cofactor_BS"/>
</dbReference>
<dbReference type="InterPro" id="IPR010051">
    <property type="entry name" value="Periplasm_NO3_reductase_lsu"/>
</dbReference>
<dbReference type="InterPro" id="IPR050123">
    <property type="entry name" value="Prok_molybdopt-oxidoreductase"/>
</dbReference>
<dbReference type="InterPro" id="IPR006311">
    <property type="entry name" value="TAT_signal"/>
</dbReference>
<dbReference type="InterPro" id="IPR019546">
    <property type="entry name" value="TAT_signal_bac_arc"/>
</dbReference>
<dbReference type="NCBIfam" id="TIGR01706">
    <property type="entry name" value="NAPA"/>
    <property type="match status" value="1"/>
</dbReference>
<dbReference type="NCBIfam" id="NF010055">
    <property type="entry name" value="PRK13532.1"/>
    <property type="match status" value="1"/>
</dbReference>
<dbReference type="NCBIfam" id="TIGR01409">
    <property type="entry name" value="TAT_signal_seq"/>
    <property type="match status" value="1"/>
</dbReference>
<dbReference type="PANTHER" id="PTHR43105:SF11">
    <property type="entry name" value="PERIPLASMIC NITRATE REDUCTASE"/>
    <property type="match status" value="1"/>
</dbReference>
<dbReference type="PANTHER" id="PTHR43105">
    <property type="entry name" value="RESPIRATORY NITRATE REDUCTASE"/>
    <property type="match status" value="1"/>
</dbReference>
<dbReference type="Pfam" id="PF04879">
    <property type="entry name" value="Molybdop_Fe4S4"/>
    <property type="match status" value="1"/>
</dbReference>
<dbReference type="Pfam" id="PF00384">
    <property type="entry name" value="Molybdopterin"/>
    <property type="match status" value="1"/>
</dbReference>
<dbReference type="Pfam" id="PF01568">
    <property type="entry name" value="Molydop_binding"/>
    <property type="match status" value="1"/>
</dbReference>
<dbReference type="SMART" id="SM00926">
    <property type="entry name" value="Molybdop_Fe4S4"/>
    <property type="match status" value="1"/>
</dbReference>
<dbReference type="SUPFAM" id="SSF50692">
    <property type="entry name" value="ADC-like"/>
    <property type="match status" value="1"/>
</dbReference>
<dbReference type="SUPFAM" id="SSF53706">
    <property type="entry name" value="Formate dehydrogenase/DMSO reductase, domains 1-3"/>
    <property type="match status" value="1"/>
</dbReference>
<dbReference type="PROSITE" id="PS51669">
    <property type="entry name" value="4FE4S_MOW_BIS_MGD"/>
    <property type="match status" value="1"/>
</dbReference>
<dbReference type="PROSITE" id="PS00551">
    <property type="entry name" value="MOLYBDOPTERIN_PROK_1"/>
    <property type="match status" value="1"/>
</dbReference>
<dbReference type="PROSITE" id="PS51318">
    <property type="entry name" value="TAT"/>
    <property type="match status" value="1"/>
</dbReference>
<sequence length="831" mass="93381">MTLSRRDFIKQTAVAATASVAGVTLPAGAANFVTDSEVTKLKWSKAPCRFCGTGCGVTVAVRDNKVVATNGDPQAEVNKGLNCVKGYFLSKIMYGQDRLTKPLLRMKNGQYDKNGEFAPVTWERAFDEMERQFKRVLKEKGPTAVGMFGSGQWTVWEGYAASKLYKAGFRSNNIDPNARHCMASAVQGFMRTFGMDEPMGCYDDFEAADAFVLWGSNMAEMHPILWTRITDRRLSHPKTRVAVLSTFTHRSFDLADIPVIFKPQTDLAMMNYIAHYIIKNNKVNKDFVNKHTVFKEGVTNIGYGLRPDHPLQKAAKNAADPGASRPITFDDFARFVAKYDADTVSKLSGVPKDKLDQLAELYADTNIKVMSLWTMGFNQHTRGSWANNMVYNLHLLTGKIATPGNSPFSLTGQPSACGTAREVGTFSHRLPADMVVTNPKHREEAERIWKLPPGTIPDKPGYHAVLQNRMLKDGKLNAYWVQVNNNMQAAANLMEEGLPGYRNPANFIVVSDAYPTVTALAADLILPSAMWVEKEGAYGNAERRTQFWHQLVDAPGEARSDLWQLMEFSKRFKVEDVWPADLIAKKPEYRGKTLFDVLYRNGQVDKFPLKEVNAEYHNAEAKAFGFYVQKGLFEEYATFGRGHGHDLAPFDAYHEARGLRWPVVNGKETRWRYREGSDPYVKAGTGYQFYGNPDGKAVIFALPYEPPAESPDKEYPYWLVTGRVLEHWHSGSMTRRVPELYRAFPNAVVFMHPEDAKAMGLRRGVEVEVVSRRGSMRSRLETRGRDAPPRGLVFVPWFDASQLINKVTLDATCPISLQTDFKKCAVKIVKV</sequence>
<name>NAPA_CUPTR</name>